<accession>Q3HXY7</accession>
<keyword id="KW-0165">Cleavage on pair of basic residues</keyword>
<keyword id="KW-1015">Disulfide bond</keyword>
<keyword id="KW-0339">Growth factor</keyword>
<keyword id="KW-0446">Lipid-binding</keyword>
<keyword id="KW-0481">Metalloenzyme inhibitor</keyword>
<keyword id="KW-0483">Metalloprotease inhibitor</keyword>
<keyword id="KW-0646">Protease inhibitor</keyword>
<keyword id="KW-0964">Secreted</keyword>
<keyword id="KW-0732">Signal</keyword>
<keyword id="KW-0800">Toxin</keyword>
<proteinExistence type="evidence at transcript level"/>
<name>NGFV1_NOTSC</name>
<sequence length="244" mass="27770">MSMLCYTLIIAFLIGIWAAPKSEDNVPLGSPATSDLSDTSCAQTHEGLKTSRNTDQRHPAPKKAEDQELGSVANIIVDPKLFQKRRFQSPRVLFSTQPPPLSRDEQSVEFLDNEDTLNRNIRAKRENHPVHNQGEHSVCDSVSDWVIKTTATDIRGNMVTVMVDINRNNEVYKQYFFETKCRNPNPNPVQSECRGIDSRLWNSYCTTTQTFVRALTMEGNQASWRFIRIDTACVCVIIRKTDNF</sequence>
<organism>
    <name type="scientific">Notechis scutatus scutatus</name>
    <name type="common">Mainland tiger snake</name>
    <name type="synonym">Common tiger snake</name>
    <dbReference type="NCBI Taxonomy" id="70142"/>
    <lineage>
        <taxon>Eukaryota</taxon>
        <taxon>Metazoa</taxon>
        <taxon>Chordata</taxon>
        <taxon>Craniata</taxon>
        <taxon>Vertebrata</taxon>
        <taxon>Euteleostomi</taxon>
        <taxon>Lepidosauria</taxon>
        <taxon>Squamata</taxon>
        <taxon>Bifurcata</taxon>
        <taxon>Unidentata</taxon>
        <taxon>Episquamata</taxon>
        <taxon>Toxicofera</taxon>
        <taxon>Serpentes</taxon>
        <taxon>Colubroidea</taxon>
        <taxon>Elapidae</taxon>
        <taxon>Hydrophiinae</taxon>
        <taxon>Notechis</taxon>
    </lineage>
</organism>
<reference key="1">
    <citation type="submission" date="2005-08" db="EMBL/GenBank/DDBJ databases">
        <title>Identification of nerve growth factor as a ubiquitous component of Australian elapid snake venoms.</title>
        <authorList>
            <person name="Earl S.T.H."/>
            <person name="St Pierre L."/>
            <person name="Birrell G.W."/>
            <person name="Wallis T.P."/>
            <person name="Masci P.P."/>
            <person name="de Jersey J."/>
            <person name="Gorman J.J."/>
            <person name="Lavin M.F."/>
        </authorList>
    </citation>
    <scope>NUCLEOTIDE SEQUENCE [MRNA]</scope>
    <source>
        <tissue>Venom gland</tissue>
    </source>
</reference>
<protein>
    <recommendedName>
        <fullName>Venom nerve growth factor 1</fullName>
        <shortName>v-NGF-1</shortName>
        <shortName>vNGF-1</shortName>
    </recommendedName>
</protein>
<evidence type="ECO:0000250" key="1"/>
<evidence type="ECO:0000250" key="2">
    <source>
        <dbReference type="UniProtKB" id="P61898"/>
    </source>
</evidence>
<evidence type="ECO:0000250" key="3">
    <source>
        <dbReference type="UniProtKB" id="P61899"/>
    </source>
</evidence>
<evidence type="ECO:0000255" key="4"/>
<evidence type="ECO:0000256" key="5">
    <source>
        <dbReference type="SAM" id="MobiDB-lite"/>
    </source>
</evidence>
<evidence type="ECO:0000305" key="6"/>
<comment type="function">
    <text evidence="2 3">Nerve growth factor is important for the development and maintenance of the sympathetic and sensory nervous systems. It stimulates division and differentiation of sympathetic and embryonic sensory neurons as well as basal forebrain cholinergic neurons in the brain. Its relevance in the snake venom is not clear. However, it has been shown to inhibit metalloproteinase-dependent proteolysis of platelet glycoprotein Ib alpha, suggesting a metalloproteinase inhibition to prevent metalloprotease autodigestion and/or protection against prey proteases (By similarity). Binds a lipid between the two protein chains in the homodimer. The lipid-bound form promotes histamine relase from mouse mast cells, contrary to the lipid-free form (By similarity).</text>
</comment>
<comment type="subunit">
    <text evidence="2">Homodimer; non-covalently linked.</text>
</comment>
<comment type="subcellular location">
    <subcellularLocation>
        <location evidence="2">Secreted</location>
    </subcellularLocation>
</comment>
<comment type="tissue specificity">
    <text>Expressed by the venom gland.</text>
</comment>
<comment type="similarity">
    <text evidence="6">Belongs to the NGF-beta family.</text>
</comment>
<feature type="signal peptide" evidence="4">
    <location>
        <begin position="1"/>
        <end position="18"/>
    </location>
</feature>
<feature type="propeptide" id="PRO_0000043294" evidence="1">
    <location>
        <begin position="19"/>
        <end position="125"/>
    </location>
</feature>
<feature type="chain" id="PRO_0000043295" description="Venom nerve growth factor 1">
    <location>
        <begin position="126"/>
        <end position="244"/>
    </location>
</feature>
<feature type="region of interest" description="Disordered" evidence="5">
    <location>
        <begin position="47"/>
        <end position="67"/>
    </location>
</feature>
<feature type="compositionally biased region" description="Basic and acidic residues" evidence="5">
    <location>
        <begin position="47"/>
        <end position="66"/>
    </location>
</feature>
<feature type="disulfide bond" evidence="2">
    <location>
        <begin position="139"/>
        <end position="205"/>
    </location>
</feature>
<feature type="disulfide bond" evidence="2">
    <location>
        <begin position="181"/>
        <end position="233"/>
    </location>
</feature>
<feature type="disulfide bond" evidence="2">
    <location>
        <begin position="193"/>
        <end position="235"/>
    </location>
</feature>
<dbReference type="EMBL" id="DQ181908">
    <property type="protein sequence ID" value="ABA60120.1"/>
    <property type="molecule type" value="mRNA"/>
</dbReference>
<dbReference type="SMR" id="Q3HXY7"/>
<dbReference type="GO" id="GO:0030424">
    <property type="term" value="C:axon"/>
    <property type="evidence" value="ECO:0007669"/>
    <property type="project" value="TreeGrafter"/>
</dbReference>
<dbReference type="GO" id="GO:0030425">
    <property type="term" value="C:dendrite"/>
    <property type="evidence" value="ECO:0007669"/>
    <property type="project" value="TreeGrafter"/>
</dbReference>
<dbReference type="GO" id="GO:0005615">
    <property type="term" value="C:extracellular space"/>
    <property type="evidence" value="ECO:0007669"/>
    <property type="project" value="TreeGrafter"/>
</dbReference>
<dbReference type="GO" id="GO:0008021">
    <property type="term" value="C:synaptic vesicle"/>
    <property type="evidence" value="ECO:0007669"/>
    <property type="project" value="TreeGrafter"/>
</dbReference>
<dbReference type="GO" id="GO:0008083">
    <property type="term" value="F:growth factor activity"/>
    <property type="evidence" value="ECO:0007669"/>
    <property type="project" value="UniProtKB-KW"/>
</dbReference>
<dbReference type="GO" id="GO:0008289">
    <property type="term" value="F:lipid binding"/>
    <property type="evidence" value="ECO:0007669"/>
    <property type="project" value="UniProtKB-KW"/>
</dbReference>
<dbReference type="GO" id="GO:0008191">
    <property type="term" value="F:metalloendopeptidase inhibitor activity"/>
    <property type="evidence" value="ECO:0000250"/>
    <property type="project" value="UniProtKB"/>
</dbReference>
<dbReference type="GO" id="GO:0005163">
    <property type="term" value="F:nerve growth factor receptor binding"/>
    <property type="evidence" value="ECO:0007669"/>
    <property type="project" value="TreeGrafter"/>
</dbReference>
<dbReference type="GO" id="GO:0090729">
    <property type="term" value="F:toxin activity"/>
    <property type="evidence" value="ECO:0007669"/>
    <property type="project" value="UniProtKB-KW"/>
</dbReference>
<dbReference type="GO" id="GO:0007169">
    <property type="term" value="P:cell surface receptor protein tyrosine kinase signaling pathway"/>
    <property type="evidence" value="ECO:0007669"/>
    <property type="project" value="TreeGrafter"/>
</dbReference>
<dbReference type="GO" id="GO:0050804">
    <property type="term" value="P:modulation of chemical synaptic transmission"/>
    <property type="evidence" value="ECO:0007669"/>
    <property type="project" value="TreeGrafter"/>
</dbReference>
<dbReference type="GO" id="GO:0043524">
    <property type="term" value="P:negative regulation of neuron apoptotic process"/>
    <property type="evidence" value="ECO:0007669"/>
    <property type="project" value="TreeGrafter"/>
</dbReference>
<dbReference type="GO" id="GO:0021675">
    <property type="term" value="P:nerve development"/>
    <property type="evidence" value="ECO:0007669"/>
    <property type="project" value="TreeGrafter"/>
</dbReference>
<dbReference type="GO" id="GO:0038180">
    <property type="term" value="P:nerve growth factor signaling pathway"/>
    <property type="evidence" value="ECO:0007669"/>
    <property type="project" value="TreeGrafter"/>
</dbReference>
<dbReference type="GO" id="GO:0048812">
    <property type="term" value="P:neuron projection morphogenesis"/>
    <property type="evidence" value="ECO:0007669"/>
    <property type="project" value="TreeGrafter"/>
</dbReference>
<dbReference type="FunFam" id="2.10.90.10:FF:000002">
    <property type="entry name" value="Brain-derived neurotrophic factor"/>
    <property type="match status" value="1"/>
</dbReference>
<dbReference type="Gene3D" id="2.10.90.10">
    <property type="entry name" value="Cystine-knot cytokines"/>
    <property type="match status" value="1"/>
</dbReference>
<dbReference type="InterPro" id="IPR029034">
    <property type="entry name" value="Cystine-knot_cytokine"/>
</dbReference>
<dbReference type="InterPro" id="IPR020408">
    <property type="entry name" value="Nerve_growth_factor-like"/>
</dbReference>
<dbReference type="InterPro" id="IPR002072">
    <property type="entry name" value="Nerve_growth_factor-rel"/>
</dbReference>
<dbReference type="InterPro" id="IPR020425">
    <property type="entry name" value="Nerve_growth_factor_bsu"/>
</dbReference>
<dbReference type="InterPro" id="IPR019846">
    <property type="entry name" value="Nerve_growth_factor_CS"/>
</dbReference>
<dbReference type="InterPro" id="IPR020433">
    <property type="entry name" value="Venom_nerve_growth_factor"/>
</dbReference>
<dbReference type="PANTHER" id="PTHR11589:SF10">
    <property type="entry name" value="BETA-NERVE GROWTH FACTOR"/>
    <property type="match status" value="1"/>
</dbReference>
<dbReference type="PANTHER" id="PTHR11589">
    <property type="entry name" value="NERVE GROWTH FACTOR NGF -RELATED"/>
    <property type="match status" value="1"/>
</dbReference>
<dbReference type="Pfam" id="PF00243">
    <property type="entry name" value="NGF"/>
    <property type="match status" value="1"/>
</dbReference>
<dbReference type="PIRSF" id="PIRSF001789">
    <property type="entry name" value="NGF"/>
    <property type="match status" value="1"/>
</dbReference>
<dbReference type="PRINTS" id="PR00268">
    <property type="entry name" value="NGF"/>
</dbReference>
<dbReference type="PRINTS" id="PR01913">
    <property type="entry name" value="NGFBETA"/>
</dbReference>
<dbReference type="PRINTS" id="PR01917">
    <property type="entry name" value="VENOMNGF"/>
</dbReference>
<dbReference type="SMART" id="SM00140">
    <property type="entry name" value="NGF"/>
    <property type="match status" value="1"/>
</dbReference>
<dbReference type="SUPFAM" id="SSF57501">
    <property type="entry name" value="Cystine-knot cytokines"/>
    <property type="match status" value="1"/>
</dbReference>
<dbReference type="PROSITE" id="PS00248">
    <property type="entry name" value="NGF_1"/>
    <property type="match status" value="1"/>
</dbReference>
<dbReference type="PROSITE" id="PS50270">
    <property type="entry name" value="NGF_2"/>
    <property type="match status" value="1"/>
</dbReference>